<comment type="function">
    <text evidence="1">Catalyzes the formation of S-adenosylmethionine (AdoMet) from methionine and ATP. The overall synthetic reaction is composed of two sequential steps, AdoMet formation and the subsequent tripolyphosphate hydrolysis which occurs prior to release of AdoMet from the enzyme.</text>
</comment>
<comment type="catalytic activity">
    <reaction evidence="1">
        <text>L-methionine + ATP + H2O = S-adenosyl-L-methionine + phosphate + diphosphate</text>
        <dbReference type="Rhea" id="RHEA:21080"/>
        <dbReference type="ChEBI" id="CHEBI:15377"/>
        <dbReference type="ChEBI" id="CHEBI:30616"/>
        <dbReference type="ChEBI" id="CHEBI:33019"/>
        <dbReference type="ChEBI" id="CHEBI:43474"/>
        <dbReference type="ChEBI" id="CHEBI:57844"/>
        <dbReference type="ChEBI" id="CHEBI:59789"/>
        <dbReference type="EC" id="2.5.1.6"/>
    </reaction>
</comment>
<comment type="cofactor">
    <cofactor evidence="1">
        <name>Mg(2+)</name>
        <dbReference type="ChEBI" id="CHEBI:18420"/>
    </cofactor>
    <text evidence="1">Binds 2 divalent ions per subunit.</text>
</comment>
<comment type="cofactor">
    <cofactor evidence="1">
        <name>K(+)</name>
        <dbReference type="ChEBI" id="CHEBI:29103"/>
    </cofactor>
    <text evidence="1">Binds 1 potassium ion per subunit.</text>
</comment>
<comment type="pathway">
    <text evidence="1">Amino-acid biosynthesis; S-adenosyl-L-methionine biosynthesis; S-adenosyl-L-methionine from L-methionine: step 1/1.</text>
</comment>
<comment type="subunit">
    <text evidence="1">Homotetramer; dimer of dimers.</text>
</comment>
<comment type="subcellular location">
    <subcellularLocation>
        <location evidence="1">Cytoplasm</location>
    </subcellularLocation>
</comment>
<comment type="similarity">
    <text evidence="1">Belongs to the AdoMet synthase family.</text>
</comment>
<protein>
    <recommendedName>
        <fullName evidence="1">S-adenosylmethionine synthase</fullName>
        <shortName evidence="1">AdoMet synthase</shortName>
        <ecNumber evidence="1">2.5.1.6</ecNumber>
    </recommendedName>
    <alternativeName>
        <fullName evidence="1">MAT</fullName>
    </alternativeName>
    <alternativeName>
        <fullName evidence="1">Methionine adenosyltransferase</fullName>
    </alternativeName>
</protein>
<proteinExistence type="inferred from homology"/>
<accession>A5CYJ7</accession>
<gene>
    <name evidence="1" type="primary">metK</name>
    <name type="ordered locus">PTH_2759</name>
</gene>
<sequence length="396" mass="43622">MARRLFTSESVTEGHPDKIADQISDAVLDAIFEKDPLARVACETLVTTGLVLVAGEITTDCYVDIPRVARETIREIGYTRAKYGFDCDTCAVITSIDEQSSDIAQGVDRALEVRERYGNEDELEATGAGDQGMMFGYATTETPELMPLPISLAHRLARRLAEVRKSRLLPYLRPDGKTQVTVEYENGRPVRVDTIVISTQHHPRVTLDEIRSGVLEHVVKPVVPPEFLDGSTRFFVNPTGRFVIGGPQGDTGLTGRKIIVDTYGGMARHGGGSFSGKDPTKVDRSASYAARYVAKNIVAAGLAEKCEFQVAYAIGVAHPVSMMVDTFGTGRVDEQTLVKLVKEHFDLRPAAIIKELDLRRPIYRQVSVYGHFGRNDLDLPWERTDKAEALRRGAGL</sequence>
<evidence type="ECO:0000255" key="1">
    <source>
        <dbReference type="HAMAP-Rule" id="MF_00086"/>
    </source>
</evidence>
<keyword id="KW-0067">ATP-binding</keyword>
<keyword id="KW-0963">Cytoplasm</keyword>
<keyword id="KW-0460">Magnesium</keyword>
<keyword id="KW-0479">Metal-binding</keyword>
<keyword id="KW-0547">Nucleotide-binding</keyword>
<keyword id="KW-0554">One-carbon metabolism</keyword>
<keyword id="KW-0630">Potassium</keyword>
<keyword id="KW-1185">Reference proteome</keyword>
<keyword id="KW-0808">Transferase</keyword>
<reference key="1">
    <citation type="journal article" date="2008" name="Genome Res.">
        <title>The genome of Pelotomaculum thermopropionicum reveals niche-associated evolution in anaerobic microbiota.</title>
        <authorList>
            <person name="Kosaka T."/>
            <person name="Kato S."/>
            <person name="Shimoyama T."/>
            <person name="Ishii S."/>
            <person name="Abe T."/>
            <person name="Watanabe K."/>
        </authorList>
    </citation>
    <scope>NUCLEOTIDE SEQUENCE [LARGE SCALE GENOMIC DNA]</scope>
    <source>
        <strain>DSM 13744 / JCM 10971 / SI</strain>
    </source>
</reference>
<dbReference type="EC" id="2.5.1.6" evidence="1"/>
<dbReference type="EMBL" id="AP009389">
    <property type="protein sequence ID" value="BAF60940.1"/>
    <property type="molecule type" value="Genomic_DNA"/>
</dbReference>
<dbReference type="SMR" id="A5CYJ7"/>
<dbReference type="STRING" id="370438.PTH_2759"/>
<dbReference type="KEGG" id="pth:PTH_2759"/>
<dbReference type="eggNOG" id="COG0192">
    <property type="taxonomic scope" value="Bacteria"/>
</dbReference>
<dbReference type="HOGENOM" id="CLU_041802_1_1_9"/>
<dbReference type="UniPathway" id="UPA00315">
    <property type="reaction ID" value="UER00080"/>
</dbReference>
<dbReference type="Proteomes" id="UP000006556">
    <property type="component" value="Chromosome"/>
</dbReference>
<dbReference type="GO" id="GO:0005737">
    <property type="term" value="C:cytoplasm"/>
    <property type="evidence" value="ECO:0007669"/>
    <property type="project" value="UniProtKB-SubCell"/>
</dbReference>
<dbReference type="GO" id="GO:0005524">
    <property type="term" value="F:ATP binding"/>
    <property type="evidence" value="ECO:0007669"/>
    <property type="project" value="UniProtKB-UniRule"/>
</dbReference>
<dbReference type="GO" id="GO:0000287">
    <property type="term" value="F:magnesium ion binding"/>
    <property type="evidence" value="ECO:0007669"/>
    <property type="project" value="UniProtKB-UniRule"/>
</dbReference>
<dbReference type="GO" id="GO:0004478">
    <property type="term" value="F:methionine adenosyltransferase activity"/>
    <property type="evidence" value="ECO:0007669"/>
    <property type="project" value="UniProtKB-UniRule"/>
</dbReference>
<dbReference type="GO" id="GO:0006730">
    <property type="term" value="P:one-carbon metabolic process"/>
    <property type="evidence" value="ECO:0007669"/>
    <property type="project" value="UniProtKB-KW"/>
</dbReference>
<dbReference type="GO" id="GO:0006556">
    <property type="term" value="P:S-adenosylmethionine biosynthetic process"/>
    <property type="evidence" value="ECO:0007669"/>
    <property type="project" value="UniProtKB-UniRule"/>
</dbReference>
<dbReference type="CDD" id="cd18079">
    <property type="entry name" value="S-AdoMet_synt"/>
    <property type="match status" value="1"/>
</dbReference>
<dbReference type="FunFam" id="3.30.300.10:FF:000003">
    <property type="entry name" value="S-adenosylmethionine synthase"/>
    <property type="match status" value="1"/>
</dbReference>
<dbReference type="FunFam" id="3.30.300.10:FF:000004">
    <property type="entry name" value="S-adenosylmethionine synthase"/>
    <property type="match status" value="1"/>
</dbReference>
<dbReference type="Gene3D" id="3.30.300.10">
    <property type="match status" value="3"/>
</dbReference>
<dbReference type="HAMAP" id="MF_00086">
    <property type="entry name" value="S_AdoMet_synth1"/>
    <property type="match status" value="1"/>
</dbReference>
<dbReference type="InterPro" id="IPR022631">
    <property type="entry name" value="ADOMET_SYNTHASE_CS"/>
</dbReference>
<dbReference type="InterPro" id="IPR022630">
    <property type="entry name" value="S-AdoMet_synt_C"/>
</dbReference>
<dbReference type="InterPro" id="IPR022629">
    <property type="entry name" value="S-AdoMet_synt_central"/>
</dbReference>
<dbReference type="InterPro" id="IPR022628">
    <property type="entry name" value="S-AdoMet_synt_N"/>
</dbReference>
<dbReference type="InterPro" id="IPR002133">
    <property type="entry name" value="S-AdoMet_synthetase"/>
</dbReference>
<dbReference type="InterPro" id="IPR022636">
    <property type="entry name" value="S-AdoMet_synthetase_sfam"/>
</dbReference>
<dbReference type="NCBIfam" id="TIGR01034">
    <property type="entry name" value="metK"/>
    <property type="match status" value="1"/>
</dbReference>
<dbReference type="PANTHER" id="PTHR11964">
    <property type="entry name" value="S-ADENOSYLMETHIONINE SYNTHETASE"/>
    <property type="match status" value="1"/>
</dbReference>
<dbReference type="Pfam" id="PF02773">
    <property type="entry name" value="S-AdoMet_synt_C"/>
    <property type="match status" value="1"/>
</dbReference>
<dbReference type="Pfam" id="PF02772">
    <property type="entry name" value="S-AdoMet_synt_M"/>
    <property type="match status" value="1"/>
</dbReference>
<dbReference type="Pfam" id="PF00438">
    <property type="entry name" value="S-AdoMet_synt_N"/>
    <property type="match status" value="1"/>
</dbReference>
<dbReference type="PIRSF" id="PIRSF000497">
    <property type="entry name" value="MAT"/>
    <property type="match status" value="1"/>
</dbReference>
<dbReference type="SUPFAM" id="SSF55973">
    <property type="entry name" value="S-adenosylmethionine synthetase"/>
    <property type="match status" value="3"/>
</dbReference>
<dbReference type="PROSITE" id="PS00376">
    <property type="entry name" value="ADOMET_SYNTHASE_1"/>
    <property type="match status" value="1"/>
</dbReference>
<dbReference type="PROSITE" id="PS00377">
    <property type="entry name" value="ADOMET_SYNTHASE_2"/>
    <property type="match status" value="1"/>
</dbReference>
<feature type="chain" id="PRO_1000075384" description="S-adenosylmethionine synthase">
    <location>
        <begin position="1"/>
        <end position="396"/>
    </location>
</feature>
<feature type="region of interest" description="Flexible loop" evidence="1">
    <location>
        <begin position="99"/>
        <end position="109"/>
    </location>
</feature>
<feature type="binding site" description="in other chain" evidence="1">
    <location>
        <position position="15"/>
    </location>
    <ligand>
        <name>ATP</name>
        <dbReference type="ChEBI" id="CHEBI:30616"/>
        <note>ligand shared between two neighboring subunits</note>
    </ligand>
</feature>
<feature type="binding site" evidence="1">
    <location>
        <position position="17"/>
    </location>
    <ligand>
        <name>Mg(2+)</name>
        <dbReference type="ChEBI" id="CHEBI:18420"/>
    </ligand>
</feature>
<feature type="binding site" evidence="1">
    <location>
        <position position="43"/>
    </location>
    <ligand>
        <name>K(+)</name>
        <dbReference type="ChEBI" id="CHEBI:29103"/>
    </ligand>
</feature>
<feature type="binding site" description="in other chain" evidence="1">
    <location>
        <position position="56"/>
    </location>
    <ligand>
        <name>L-methionine</name>
        <dbReference type="ChEBI" id="CHEBI:57844"/>
        <note>ligand shared between two neighboring subunits</note>
    </ligand>
</feature>
<feature type="binding site" description="in other chain" evidence="1">
    <location>
        <position position="99"/>
    </location>
    <ligand>
        <name>L-methionine</name>
        <dbReference type="ChEBI" id="CHEBI:57844"/>
        <note>ligand shared between two neighboring subunits</note>
    </ligand>
</feature>
<feature type="binding site" description="in other chain" evidence="1">
    <location>
        <begin position="175"/>
        <end position="177"/>
    </location>
    <ligand>
        <name>ATP</name>
        <dbReference type="ChEBI" id="CHEBI:30616"/>
        <note>ligand shared between two neighboring subunits</note>
    </ligand>
</feature>
<feature type="binding site" description="in other chain" evidence="1">
    <location>
        <begin position="241"/>
        <end position="242"/>
    </location>
    <ligand>
        <name>ATP</name>
        <dbReference type="ChEBI" id="CHEBI:30616"/>
        <note>ligand shared between two neighboring subunits</note>
    </ligand>
</feature>
<feature type="binding site" evidence="1">
    <location>
        <position position="250"/>
    </location>
    <ligand>
        <name>ATP</name>
        <dbReference type="ChEBI" id="CHEBI:30616"/>
        <note>ligand shared between two neighboring subunits</note>
    </ligand>
</feature>
<feature type="binding site" evidence="1">
    <location>
        <position position="250"/>
    </location>
    <ligand>
        <name>L-methionine</name>
        <dbReference type="ChEBI" id="CHEBI:57844"/>
        <note>ligand shared between two neighboring subunits</note>
    </ligand>
</feature>
<feature type="binding site" description="in other chain" evidence="1">
    <location>
        <begin position="256"/>
        <end position="257"/>
    </location>
    <ligand>
        <name>ATP</name>
        <dbReference type="ChEBI" id="CHEBI:30616"/>
        <note>ligand shared between two neighboring subunits</note>
    </ligand>
</feature>
<feature type="binding site" evidence="1">
    <location>
        <position position="273"/>
    </location>
    <ligand>
        <name>ATP</name>
        <dbReference type="ChEBI" id="CHEBI:30616"/>
        <note>ligand shared between two neighboring subunits</note>
    </ligand>
</feature>
<feature type="binding site" evidence="1">
    <location>
        <position position="277"/>
    </location>
    <ligand>
        <name>ATP</name>
        <dbReference type="ChEBI" id="CHEBI:30616"/>
        <note>ligand shared between two neighboring subunits</note>
    </ligand>
</feature>
<feature type="binding site" description="in other chain" evidence="1">
    <location>
        <position position="281"/>
    </location>
    <ligand>
        <name>L-methionine</name>
        <dbReference type="ChEBI" id="CHEBI:57844"/>
        <note>ligand shared between two neighboring subunits</note>
    </ligand>
</feature>
<organism>
    <name type="scientific">Pelotomaculum thermopropionicum (strain DSM 13744 / JCM 10971 / SI)</name>
    <dbReference type="NCBI Taxonomy" id="370438"/>
    <lineage>
        <taxon>Bacteria</taxon>
        <taxon>Bacillati</taxon>
        <taxon>Bacillota</taxon>
        <taxon>Clostridia</taxon>
        <taxon>Eubacteriales</taxon>
        <taxon>Desulfotomaculaceae</taxon>
        <taxon>Pelotomaculum</taxon>
    </lineage>
</organism>
<name>METK_PELTS</name>